<feature type="transit peptide" description="Chloroplast" evidence="2">
    <location>
        <begin position="1"/>
        <end position="44"/>
    </location>
</feature>
<feature type="chain" id="PRO_0000378339" description="Nudix hydrolase 27, chloroplastic">
    <location>
        <begin position="45"/>
        <end position="227"/>
    </location>
</feature>
<feature type="domain" description="Nudix hydrolase">
    <location>
        <begin position="61"/>
        <end position="208"/>
    </location>
</feature>
<feature type="short sequence motif" description="Nudix box">
    <location>
        <begin position="94"/>
        <end position="115"/>
    </location>
</feature>
<feature type="binding site" evidence="1">
    <location>
        <position position="109"/>
    </location>
    <ligand>
        <name>Mn(2+)</name>
        <dbReference type="ChEBI" id="CHEBI:29035"/>
    </ligand>
</feature>
<feature type="binding site" evidence="1">
    <location>
        <position position="113"/>
    </location>
    <ligand>
        <name>Mn(2+)</name>
        <dbReference type="ChEBI" id="CHEBI:29035"/>
    </ligand>
</feature>
<evidence type="ECO:0000250" key="1"/>
<evidence type="ECO:0000255" key="2"/>
<evidence type="ECO:0000269" key="3">
    <source>
    </source>
</evidence>
<evidence type="ECO:0000305" key="4"/>
<accession>Q9FNH4</accession>
<sequence length="227" mass="25864">MAVKASGFIGKSAISVHLDFSSFPVKFSCLKQFSVSSPKPLVVLSVALSSPARTVESPPVGYRKNVGICLVSPCRKIFTASKIHIPDTWQMPQGGADEGEDLRNAAFRELREETGVTSAEFIAEIPNWLTYDFPREVKDKLNRKWRTSYKGQAQKWFLFKFTGKEEEINLLGDGTAKPEFKVWSWMLPEQVIEHAVYFKRPVYEHVIKQFNPYFVDEEKDSMNSSKD</sequence>
<dbReference type="EC" id="3.6.1.-"/>
<dbReference type="EMBL" id="AF372941">
    <property type="protein sequence ID" value="AAK50081.1"/>
    <property type="molecule type" value="mRNA"/>
</dbReference>
<dbReference type="EMBL" id="AY113163">
    <property type="protein sequence ID" value="AAM47466.1"/>
    <property type="molecule type" value="mRNA"/>
</dbReference>
<dbReference type="EMBL" id="AB006700">
    <property type="protein sequence ID" value="BAB08956.1"/>
    <property type="molecule type" value="Genomic_DNA"/>
</dbReference>
<dbReference type="EMBL" id="CP002688">
    <property type="protein sequence ID" value="AED91004.1"/>
    <property type="molecule type" value="Genomic_DNA"/>
</dbReference>
<dbReference type="RefSeq" id="NP_196252.1">
    <property type="nucleotide sequence ID" value="NM_120717.5"/>
</dbReference>
<dbReference type="SMR" id="Q9FNH4"/>
<dbReference type="BioGRID" id="15801">
    <property type="interactions" value="1"/>
</dbReference>
<dbReference type="FunCoup" id="Q9FNH4">
    <property type="interactions" value="547"/>
</dbReference>
<dbReference type="IntAct" id="Q9FNH4">
    <property type="interactions" value="1"/>
</dbReference>
<dbReference type="STRING" id="3702.Q9FNH4"/>
<dbReference type="PaxDb" id="3702-AT5G06340.1"/>
<dbReference type="ProteomicsDB" id="248850"/>
<dbReference type="EnsemblPlants" id="AT5G06340.1">
    <property type="protein sequence ID" value="AT5G06340.1"/>
    <property type="gene ID" value="AT5G06340"/>
</dbReference>
<dbReference type="GeneID" id="830522"/>
<dbReference type="Gramene" id="AT5G06340.1">
    <property type="protein sequence ID" value="AT5G06340.1"/>
    <property type="gene ID" value="AT5G06340"/>
</dbReference>
<dbReference type="KEGG" id="ath:AT5G06340"/>
<dbReference type="Araport" id="AT5G06340"/>
<dbReference type="TAIR" id="AT5G06340">
    <property type="gene designation" value="NUDX27"/>
</dbReference>
<dbReference type="eggNOG" id="ENOG502SKZJ">
    <property type="taxonomic scope" value="Eukaryota"/>
</dbReference>
<dbReference type="HOGENOM" id="CLU_087195_2_0_1"/>
<dbReference type="InParanoid" id="Q9FNH4"/>
<dbReference type="OMA" id="YEHVIKQ"/>
<dbReference type="OrthoDB" id="276276at2759"/>
<dbReference type="PhylomeDB" id="Q9FNH4"/>
<dbReference type="BioCyc" id="ARA:AT5G06340-MONOMER"/>
<dbReference type="SABIO-RK" id="Q9FNH4"/>
<dbReference type="PRO" id="PR:Q9FNH4"/>
<dbReference type="Proteomes" id="UP000006548">
    <property type="component" value="Chromosome 5"/>
</dbReference>
<dbReference type="ExpressionAtlas" id="Q9FNH4">
    <property type="expression patterns" value="baseline and differential"/>
</dbReference>
<dbReference type="GO" id="GO:0009507">
    <property type="term" value="C:chloroplast"/>
    <property type="evidence" value="ECO:0000314"/>
    <property type="project" value="TAIR"/>
</dbReference>
<dbReference type="GO" id="GO:0034432">
    <property type="term" value="F:bis(5'-adenosyl)-pentaphosphatase activity"/>
    <property type="evidence" value="ECO:0000314"/>
    <property type="project" value="TAIR"/>
</dbReference>
<dbReference type="GO" id="GO:0046872">
    <property type="term" value="F:metal ion binding"/>
    <property type="evidence" value="ECO:0007669"/>
    <property type="project" value="UniProtKB-KW"/>
</dbReference>
<dbReference type="CDD" id="cd03671">
    <property type="entry name" value="NUDIX_Ap4A_hydrolase_plant_like"/>
    <property type="match status" value="1"/>
</dbReference>
<dbReference type="FunFam" id="3.90.79.10:FF:000032">
    <property type="entry name" value="Nudix hydrolase 25"/>
    <property type="match status" value="1"/>
</dbReference>
<dbReference type="Gene3D" id="3.90.79.10">
    <property type="entry name" value="Nucleoside Triphosphate Pyrophosphohydrolase"/>
    <property type="match status" value="1"/>
</dbReference>
<dbReference type="HAMAP" id="MF_00298">
    <property type="entry name" value="Nudix_RppH"/>
    <property type="match status" value="1"/>
</dbReference>
<dbReference type="InterPro" id="IPR020476">
    <property type="entry name" value="Nudix_hydrolase"/>
</dbReference>
<dbReference type="InterPro" id="IPR015797">
    <property type="entry name" value="NUDIX_hydrolase-like_dom_sf"/>
</dbReference>
<dbReference type="InterPro" id="IPR020084">
    <property type="entry name" value="NUDIX_hydrolase_CS"/>
</dbReference>
<dbReference type="InterPro" id="IPR000086">
    <property type="entry name" value="NUDIX_hydrolase_dom"/>
</dbReference>
<dbReference type="InterPro" id="IPR022927">
    <property type="entry name" value="RppH"/>
</dbReference>
<dbReference type="NCBIfam" id="NF001936">
    <property type="entry name" value="PRK00714.1-3"/>
    <property type="match status" value="1"/>
</dbReference>
<dbReference type="NCBIfam" id="NF001938">
    <property type="entry name" value="PRK00714.1-5"/>
    <property type="match status" value="1"/>
</dbReference>
<dbReference type="PANTHER" id="PTHR11839:SF21">
    <property type="entry name" value="NUDIX HYDROLASE 27, CHLOROPLASTIC"/>
    <property type="match status" value="1"/>
</dbReference>
<dbReference type="PANTHER" id="PTHR11839">
    <property type="entry name" value="UDP/ADP-SUGAR PYROPHOSPHATASE"/>
    <property type="match status" value="1"/>
</dbReference>
<dbReference type="Pfam" id="PF00293">
    <property type="entry name" value="NUDIX"/>
    <property type="match status" value="1"/>
</dbReference>
<dbReference type="PRINTS" id="PR00502">
    <property type="entry name" value="NUDIXFAMILY"/>
</dbReference>
<dbReference type="SUPFAM" id="SSF55811">
    <property type="entry name" value="Nudix"/>
    <property type="match status" value="1"/>
</dbReference>
<dbReference type="PROSITE" id="PS51462">
    <property type="entry name" value="NUDIX"/>
    <property type="match status" value="1"/>
</dbReference>
<dbReference type="PROSITE" id="PS00893">
    <property type="entry name" value="NUDIX_BOX"/>
    <property type="match status" value="1"/>
</dbReference>
<comment type="function">
    <text evidence="3">Mediates the hydrolysis of some nucleoside diphosphate derivatives. Can use diadenosine 5',5'''-P(1)P(5) pentaphosphate (Ap(5)A) as substrates.</text>
</comment>
<comment type="cofactor">
    <cofactor evidence="1">
        <name>Mg(2+)</name>
        <dbReference type="ChEBI" id="CHEBI:18420"/>
    </cofactor>
    <cofactor evidence="1">
        <name>Mn(2+)</name>
        <dbReference type="ChEBI" id="CHEBI:29035"/>
    </cofactor>
</comment>
<comment type="biophysicochemical properties">
    <kinetics>
        <KM evidence="3">87.4 uM for diadenosine 5',5'''-P(1)P(5) pentaphosphate</KM>
        <Vmax evidence="3">0.15 umol/min/mg enzyme with diadenosine 5',5'''-P(1)P(5) pentaphosphate as substrate</Vmax>
    </kinetics>
</comment>
<comment type="subcellular location">
    <subcellularLocation>
        <location evidence="3">Plastid</location>
        <location evidence="3">Chloroplast</location>
    </subcellularLocation>
</comment>
<comment type="tissue specificity">
    <text evidence="3">Expressed in roots, leaves, stems and inflorescences.</text>
</comment>
<comment type="disruption phenotype">
    <text evidence="3">No visible phenotype under normal growth conditions.</text>
</comment>
<comment type="similarity">
    <text evidence="4">Belongs to the Nudix hydrolase family.</text>
</comment>
<proteinExistence type="evidence at protein level"/>
<keyword id="KW-0150">Chloroplast</keyword>
<keyword id="KW-0378">Hydrolase</keyword>
<keyword id="KW-0460">Magnesium</keyword>
<keyword id="KW-0464">Manganese</keyword>
<keyword id="KW-0479">Metal-binding</keyword>
<keyword id="KW-0934">Plastid</keyword>
<keyword id="KW-1185">Reference proteome</keyword>
<keyword id="KW-0809">Transit peptide</keyword>
<protein>
    <recommendedName>
        <fullName>Nudix hydrolase 27, chloroplastic</fullName>
        <shortName>AtNUDT27</shortName>
        <ecNumber>3.6.1.-</ecNumber>
    </recommendedName>
</protein>
<reference key="1">
    <citation type="journal article" date="1997" name="DNA Res.">
        <title>Structural analysis of Arabidopsis thaliana chromosome 5. II. Sequence features of the regions of 1,044,062 bp covered by thirteen physically assigned P1 clones.</title>
        <authorList>
            <person name="Kotani H."/>
            <person name="Nakamura Y."/>
            <person name="Sato S."/>
            <person name="Kaneko T."/>
            <person name="Asamizu E."/>
            <person name="Miyajima N."/>
            <person name="Tabata S."/>
        </authorList>
    </citation>
    <scope>NUCLEOTIDE SEQUENCE [LARGE SCALE GENOMIC DNA]</scope>
    <source>
        <strain>cv. Columbia</strain>
    </source>
</reference>
<reference key="2">
    <citation type="journal article" date="2017" name="Plant J.">
        <title>Araport11: a complete reannotation of the Arabidopsis thaliana reference genome.</title>
        <authorList>
            <person name="Cheng C.Y."/>
            <person name="Krishnakumar V."/>
            <person name="Chan A.P."/>
            <person name="Thibaud-Nissen F."/>
            <person name="Schobel S."/>
            <person name="Town C.D."/>
        </authorList>
    </citation>
    <scope>GENOME REANNOTATION</scope>
    <source>
        <strain>cv. Columbia</strain>
    </source>
</reference>
<reference key="3">
    <citation type="journal article" date="2003" name="Science">
        <title>Empirical analysis of transcriptional activity in the Arabidopsis genome.</title>
        <authorList>
            <person name="Yamada K."/>
            <person name="Lim J."/>
            <person name="Dale J.M."/>
            <person name="Chen H."/>
            <person name="Shinn P."/>
            <person name="Palm C.J."/>
            <person name="Southwick A.M."/>
            <person name="Wu H.C."/>
            <person name="Kim C.J."/>
            <person name="Nguyen M."/>
            <person name="Pham P.K."/>
            <person name="Cheuk R.F."/>
            <person name="Karlin-Newmann G."/>
            <person name="Liu S.X."/>
            <person name="Lam B."/>
            <person name="Sakano H."/>
            <person name="Wu T."/>
            <person name="Yu G."/>
            <person name="Miranda M."/>
            <person name="Quach H.L."/>
            <person name="Tripp M."/>
            <person name="Chang C.H."/>
            <person name="Lee J.M."/>
            <person name="Toriumi M.J."/>
            <person name="Chan M.M."/>
            <person name="Tang C.C."/>
            <person name="Onodera C.S."/>
            <person name="Deng J.M."/>
            <person name="Akiyama K."/>
            <person name="Ansari Y."/>
            <person name="Arakawa T."/>
            <person name="Banh J."/>
            <person name="Banno F."/>
            <person name="Bowser L."/>
            <person name="Brooks S.Y."/>
            <person name="Carninci P."/>
            <person name="Chao Q."/>
            <person name="Choy N."/>
            <person name="Enju A."/>
            <person name="Goldsmith A.D."/>
            <person name="Gurjal M."/>
            <person name="Hansen N.F."/>
            <person name="Hayashizaki Y."/>
            <person name="Johnson-Hopson C."/>
            <person name="Hsuan V.W."/>
            <person name="Iida K."/>
            <person name="Karnes M."/>
            <person name="Khan S."/>
            <person name="Koesema E."/>
            <person name="Ishida J."/>
            <person name="Jiang P.X."/>
            <person name="Jones T."/>
            <person name="Kawai J."/>
            <person name="Kamiya A."/>
            <person name="Meyers C."/>
            <person name="Nakajima M."/>
            <person name="Narusaka M."/>
            <person name="Seki M."/>
            <person name="Sakurai T."/>
            <person name="Satou M."/>
            <person name="Tamse R."/>
            <person name="Vaysberg M."/>
            <person name="Wallender E.K."/>
            <person name="Wong C."/>
            <person name="Yamamura Y."/>
            <person name="Yuan S."/>
            <person name="Shinozaki K."/>
            <person name="Davis R.W."/>
            <person name="Theologis A."/>
            <person name="Ecker J.R."/>
        </authorList>
    </citation>
    <scope>NUCLEOTIDE SEQUENCE [LARGE SCALE MRNA]</scope>
    <source>
        <strain>cv. Columbia</strain>
    </source>
</reference>
<reference key="4">
    <citation type="journal article" date="2008" name="Plant Physiol.">
        <title>Molecular characterization of organelle-type Nudix hydrolases in Arabidopsis.</title>
        <authorList>
            <person name="Ogawa T."/>
            <person name="Yoshimura K."/>
            <person name="Miyake H."/>
            <person name="Ishikawa K."/>
            <person name="Ito D."/>
            <person name="Tanabe N."/>
            <person name="Shigeoka S."/>
        </authorList>
    </citation>
    <scope>NOMENCLATURE</scope>
    <scope>FUNCTION</scope>
    <scope>SUBCELLULAR LOCATION</scope>
    <scope>TISSUE SPECIFICITY</scope>
    <scope>BIOPHYSICOCHEMICAL PROPERTIES</scope>
    <scope>DISRUPTION PHENOTYPE</scope>
</reference>
<organism>
    <name type="scientific">Arabidopsis thaliana</name>
    <name type="common">Mouse-ear cress</name>
    <dbReference type="NCBI Taxonomy" id="3702"/>
    <lineage>
        <taxon>Eukaryota</taxon>
        <taxon>Viridiplantae</taxon>
        <taxon>Streptophyta</taxon>
        <taxon>Embryophyta</taxon>
        <taxon>Tracheophyta</taxon>
        <taxon>Spermatophyta</taxon>
        <taxon>Magnoliopsida</taxon>
        <taxon>eudicotyledons</taxon>
        <taxon>Gunneridae</taxon>
        <taxon>Pentapetalae</taxon>
        <taxon>rosids</taxon>
        <taxon>malvids</taxon>
        <taxon>Brassicales</taxon>
        <taxon>Brassicaceae</taxon>
        <taxon>Camelineae</taxon>
        <taxon>Arabidopsis</taxon>
    </lineage>
</organism>
<gene>
    <name type="primary">NUDT27</name>
    <name type="synonym">NUDX27</name>
    <name type="ordered locus">At5g06340</name>
    <name type="ORF">MHF15.14</name>
</gene>
<name>NUD27_ARATH</name>